<organism>
    <name type="scientific">Autographa californica nuclear polyhedrosis virus</name>
    <name type="common">AcMNPV</name>
    <dbReference type="NCBI Taxonomy" id="46015"/>
    <lineage>
        <taxon>Viruses</taxon>
        <taxon>Viruses incertae sedis</taxon>
        <taxon>Naldaviricetes</taxon>
        <taxon>Lefavirales</taxon>
        <taxon>Baculoviridae</taxon>
        <taxon>Alphabaculovirus</taxon>
        <taxon>Alphabaculovirus aucalifornicae</taxon>
    </lineage>
</organism>
<evidence type="ECO:0000250" key="1"/>
<evidence type="ECO:0000255" key="2"/>
<evidence type="ECO:0000269" key="3">
    <source>
    </source>
</evidence>
<evidence type="ECO:0000269" key="4">
    <source>
    </source>
</evidence>
<evidence type="ECO:0000269" key="5">
    <source>
    </source>
</evidence>
<evidence type="ECO:0000305" key="6"/>
<evidence type="ECO:0007829" key="7">
    <source>
        <dbReference type="PDB" id="7X77"/>
    </source>
</evidence>
<organismHost>
    <name type="scientific">Lepidoptera</name>
    <name type="common">butterflies and moths</name>
    <dbReference type="NCBI Taxonomy" id="7088"/>
</organismHost>
<protein>
    <recommendedName>
        <fullName>Per os infectivity factor 5</fullName>
        <shortName>PIF5</shortName>
    </recommendedName>
    <alternativeName>
        <fullName>E56</fullName>
    </alternativeName>
</protein>
<dbReference type="EMBL" id="L22858">
    <property type="protein sequence ID" value="AAA66778.1"/>
    <property type="molecule type" value="Genomic_DNA"/>
</dbReference>
<dbReference type="EMBL" id="U09501">
    <property type="protein sequence ID" value="AAA98967.1"/>
    <property type="molecule type" value="Genomic_DNA"/>
</dbReference>
<dbReference type="PIR" id="F72868">
    <property type="entry name" value="F72868"/>
</dbReference>
<dbReference type="PDB" id="7X77">
    <property type="method" value="X-ray"/>
    <property type="resolution" value="2.20 A"/>
    <property type="chains" value="A=1-321"/>
</dbReference>
<dbReference type="PDBsum" id="7X77"/>
<dbReference type="SMR" id="P41705"/>
<dbReference type="GlyCosmos" id="P41705">
    <property type="glycosylation" value="1 site, No reported glycans"/>
</dbReference>
<dbReference type="KEGG" id="vg:1403981"/>
<dbReference type="OrthoDB" id="8860at10239"/>
<dbReference type="Proteomes" id="UP000008292">
    <property type="component" value="Segment"/>
</dbReference>
<dbReference type="GO" id="GO:0016020">
    <property type="term" value="C:membrane"/>
    <property type="evidence" value="ECO:0007669"/>
    <property type="project" value="UniProtKB-KW"/>
</dbReference>
<dbReference type="GO" id="GO:0019031">
    <property type="term" value="C:viral envelope"/>
    <property type="evidence" value="ECO:0007669"/>
    <property type="project" value="UniProtKB-KW"/>
</dbReference>
<dbReference type="GO" id="GO:0055036">
    <property type="term" value="C:virion membrane"/>
    <property type="evidence" value="ECO:0007669"/>
    <property type="project" value="UniProtKB-SubCell"/>
</dbReference>
<dbReference type="InterPro" id="IPR006733">
    <property type="entry name" value="Baculo_ODV-E56"/>
</dbReference>
<dbReference type="Pfam" id="PF04639">
    <property type="entry name" value="Baculo_E56"/>
    <property type="match status" value="1"/>
</dbReference>
<reference key="1">
    <citation type="journal article" date="1994" name="Virology">
        <title>The complete DNA sequence of Autographa californica nuclear polyhedrosis virus.</title>
        <authorList>
            <person name="Ayres M.D."/>
            <person name="Howard S.C."/>
            <person name="Kuzio J."/>
            <person name="Lopez-Ferber M."/>
            <person name="Possee R.D."/>
        </authorList>
    </citation>
    <scope>NUCLEOTIDE SEQUENCE [LARGE SCALE GENOMIC DNA]</scope>
    <source>
        <strain>C6</strain>
    </source>
</reference>
<reference key="2">
    <citation type="journal article" date="1996" name="Virology">
        <title>Identification and analysis of an Autographa californica nuclear polyhedrosis virus structural protein of the occlusion-derived virus envelope: ODV-E56.</title>
        <authorList>
            <person name="Braunagel S.C."/>
            <person name="Elton D.M."/>
            <person name="Ma H."/>
            <person name="Summers M.D."/>
        </authorList>
    </citation>
    <scope>NUCLEOTIDE SEQUENCE [GENOMIC DNA]</scope>
    <scope>SUBCELLULAR LOCATION</scope>
    <source>
        <strain>E2</strain>
    </source>
</reference>
<reference key="3">
    <citation type="journal article" date="2010" name="J. Virol.">
        <title>Proteomics of the Autographa californica nucleopolyhedrovirus budded virions.</title>
        <authorList>
            <person name="Wang R."/>
            <person name="Deng F."/>
            <person name="Hou D."/>
            <person name="Zhao Y."/>
            <person name="Guo L."/>
            <person name="Wang H."/>
            <person name="Hu Z."/>
        </authorList>
    </citation>
    <scope>SUBCELLULAR LOCATION</scope>
</reference>
<reference key="4">
    <citation type="journal article" date="2011" name="Virology">
        <title>Autographa californica multiple nucleopolyhedrovirus ODV-E56 is a per os infectivity factor, but is not essential for binding and fusion of occlusion-derived virus to the host midgut.</title>
        <authorList>
            <person name="Sparks W.O."/>
            <person name="Harrison R.L."/>
            <person name="Bonning B.C."/>
        </authorList>
    </citation>
    <scope>FUNCTION</scope>
</reference>
<comment type="function">
    <text evidence="4">Structural protein that plays a role in the first steps of per os larva infection.</text>
</comment>
<comment type="subcellular location">
    <subcellularLocation>
        <location evidence="3 5">Virion membrane</location>
    </subcellularLocation>
    <text evidence="3 5">Present in both the budded virus (BV) and the occluded virus (OV). The occluded form allows the virus to be transmitted from insect to insect through ingestion of contaminated food while the budded form is responsible for the dissemination of infection throughout the insect host.</text>
</comment>
<comment type="miscellaneous">
    <text evidence="1">Expressed late in infection.</text>
</comment>
<comment type="similarity">
    <text evidence="6">Belongs to the baculoviridae E56 family.</text>
</comment>
<sequence>MSFFSNLRAVNKLYPNQASFITDNTRLLTSTPAGFTNVLNAPSVRNIGNNRFQPGYQLSNNQFVSTSDINRITRNNDVPNIRGVFQGISDPQINSLSQLRRVDNVPDFNYHTKQTRSNAVKQNFPETNVRTPEGVQNALQQNPRLHSYMQSLKVGGTGILLATGGYFLFSAATLVQDIINAINNTGGSYYVQGKDAGEIAEACLLLQRTCRQDPNLNQSDVTICPFDPLLPNNPPELTNMCQGFNYEVEKTVCRGSDPSADPDSPQYVDISDLPAGQTLMCIEPYSFGDLVGDLGLDWLLGDEGLVGKSSNVSDSVSGKLMPIILLIGAVLFLGLIFYFIYRYMMKGGGGGGVGAATSPTPIVISMQNPTPTTAPR</sequence>
<name>PIF5_NPVAC</name>
<feature type="chain" id="PRO_0000132923" description="Per os infectivity factor 5">
    <location>
        <begin position="1"/>
        <end position="376"/>
    </location>
</feature>
<feature type="transmembrane region" description="Helical" evidence="2">
    <location>
        <begin position="154"/>
        <end position="174"/>
    </location>
</feature>
<feature type="transmembrane region" description="Helical" evidence="2">
    <location>
        <begin position="320"/>
        <end position="340"/>
    </location>
</feature>
<feature type="glycosylation site" description="N-linked (GlcNAc...) asparagine; by host" evidence="2">
    <location>
        <position position="183"/>
    </location>
</feature>
<feature type="helix" evidence="7">
    <location>
        <begin position="3"/>
        <end position="9"/>
    </location>
</feature>
<feature type="strand" evidence="7">
    <location>
        <begin position="14"/>
        <end position="16"/>
    </location>
</feature>
<feature type="helix" evidence="7">
    <location>
        <begin position="17"/>
        <end position="28"/>
    </location>
</feature>
<feature type="helix" evidence="7">
    <location>
        <begin position="33"/>
        <end position="35"/>
    </location>
</feature>
<feature type="helix" evidence="7">
    <location>
        <begin position="36"/>
        <end position="39"/>
    </location>
</feature>
<feature type="strand" evidence="7">
    <location>
        <begin position="41"/>
        <end position="46"/>
    </location>
</feature>
<feature type="strand" evidence="7">
    <location>
        <begin position="52"/>
        <end position="57"/>
    </location>
</feature>
<feature type="strand" evidence="7">
    <location>
        <begin position="63"/>
        <end position="65"/>
    </location>
</feature>
<feature type="helix" evidence="7">
    <location>
        <begin position="66"/>
        <end position="75"/>
    </location>
</feature>
<feature type="helix" evidence="7">
    <location>
        <begin position="78"/>
        <end position="84"/>
    </location>
</feature>
<feature type="helix" evidence="7">
    <location>
        <begin position="90"/>
        <end position="94"/>
    </location>
</feature>
<feature type="helix" evidence="7">
    <location>
        <begin position="96"/>
        <end position="102"/>
    </location>
</feature>
<feature type="helix" evidence="7">
    <location>
        <begin position="107"/>
        <end position="123"/>
    </location>
</feature>
<feature type="helix" evidence="7">
    <location>
        <begin position="125"/>
        <end position="127"/>
    </location>
</feature>
<feature type="helix" evidence="7">
    <location>
        <begin position="132"/>
        <end position="141"/>
    </location>
</feature>
<feature type="helix" evidence="7">
    <location>
        <begin position="143"/>
        <end position="155"/>
    </location>
</feature>
<feature type="strand" evidence="7">
    <location>
        <begin position="171"/>
        <end position="173"/>
    </location>
</feature>
<feature type="helix" evidence="7">
    <location>
        <begin position="174"/>
        <end position="182"/>
    </location>
</feature>
<feature type="strand" evidence="7">
    <location>
        <begin position="187"/>
        <end position="194"/>
    </location>
</feature>
<feature type="turn" evidence="7">
    <location>
        <begin position="195"/>
        <end position="198"/>
    </location>
</feature>
<feature type="strand" evidence="7">
    <location>
        <begin position="199"/>
        <end position="205"/>
    </location>
</feature>
<feature type="helix" evidence="7">
    <location>
        <begin position="206"/>
        <end position="208"/>
    </location>
</feature>
<feature type="strand" evidence="7">
    <location>
        <begin position="228"/>
        <end position="230"/>
    </location>
</feature>
<feature type="helix" evidence="7">
    <location>
        <begin position="235"/>
        <end position="238"/>
    </location>
</feature>
<feature type="turn" evidence="7">
    <location>
        <begin position="239"/>
        <end position="243"/>
    </location>
</feature>
<feature type="helix" evidence="7">
    <location>
        <begin position="246"/>
        <end position="249"/>
    </location>
</feature>
<feature type="strand" evidence="7">
    <location>
        <begin position="251"/>
        <end position="255"/>
    </location>
</feature>
<feature type="strand" evidence="7">
    <location>
        <begin position="277"/>
        <end position="282"/>
    </location>
</feature>
<feature type="helix" evidence="7">
    <location>
        <begin position="287"/>
        <end position="294"/>
    </location>
</feature>
<feature type="helix" evidence="7">
    <location>
        <begin position="297"/>
        <end position="299"/>
    </location>
</feature>
<feature type="turn" evidence="7">
    <location>
        <begin position="301"/>
        <end position="303"/>
    </location>
</feature>
<accession>P41705</accession>
<keyword id="KW-0002">3D-structure</keyword>
<keyword id="KW-0325">Glycoprotein</keyword>
<keyword id="KW-0426">Late protein</keyword>
<keyword id="KW-0472">Membrane</keyword>
<keyword id="KW-1185">Reference proteome</keyword>
<keyword id="KW-0812">Transmembrane</keyword>
<keyword id="KW-1133">Transmembrane helix</keyword>
<keyword id="KW-0261">Viral envelope protein</keyword>
<keyword id="KW-0946">Virion</keyword>
<gene>
    <name type="primary">E56</name>
    <name type="ORF">ORF148</name>
</gene>
<proteinExistence type="evidence at protein level"/>